<organism>
    <name type="scientific">Chlamydia muridarum (strain MoPn / Nigg)</name>
    <dbReference type="NCBI Taxonomy" id="243161"/>
    <lineage>
        <taxon>Bacteria</taxon>
        <taxon>Pseudomonadati</taxon>
        <taxon>Chlamydiota</taxon>
        <taxon>Chlamydiia</taxon>
        <taxon>Chlamydiales</taxon>
        <taxon>Chlamydiaceae</taxon>
        <taxon>Chlamydia/Chlamydophila group</taxon>
        <taxon>Chlamydia</taxon>
    </lineage>
</organism>
<sequence length="340" mass="37214">MSSKLVNSLRLTFLSFLGIVSTSLDAMPAGNPAFPVIPGINVEQKSACAFDLCNSYDVLSALSGNLKLCFCGDYIFSEEAQVKDVPVVTSVTTSGVGPSPTITSTTKNRNFDLVDCSLSANCVAAAFSLPDRTMSAIPLFDASFEVKIGGLKQYYRLPMNAYRDFTSDPLNSESEVTDGLIEVQSNYGFVWDVSLKKVLWKDGVSFVGVGVDYRHASCPIDYIIANSQANPEVFIADSDGKLSLKEWSVCLGLTTYVNDYILPYVAFSVGNVSREAPDNSFKKLEERFTNLKFKVRKITSSHRGNICIGATNYIADNFFYNVEGRWGSQRAVNISGGFQF</sequence>
<reference key="1">
    <citation type="journal article" date="2000" name="Nucleic Acids Res.">
        <title>Genome sequences of Chlamydia trachomatis MoPn and Chlamydia pneumoniae AR39.</title>
        <authorList>
            <person name="Read T.D."/>
            <person name="Brunham R.C."/>
            <person name="Shen C."/>
            <person name="Gill S.R."/>
            <person name="Heidelberg J.F."/>
            <person name="White O."/>
            <person name="Hickey E.K."/>
            <person name="Peterson J.D."/>
            <person name="Utterback T.R."/>
            <person name="Berry K.J."/>
            <person name="Bass S."/>
            <person name="Linher K.D."/>
            <person name="Weidman J.F."/>
            <person name="Khouri H.M."/>
            <person name="Craven B."/>
            <person name="Bowman C."/>
            <person name="Dodson R.J."/>
            <person name="Gwinn M.L."/>
            <person name="Nelson W.C."/>
            <person name="DeBoy R.T."/>
            <person name="Kolonay J.F."/>
            <person name="McClarty G."/>
            <person name="Salzberg S.L."/>
            <person name="Eisen J.A."/>
            <person name="Fraser C.M."/>
        </authorList>
    </citation>
    <scope>NUCLEOTIDE SEQUENCE [LARGE SCALE GENOMIC DNA]</scope>
    <source>
        <strain>MoPn / Nigg</strain>
    </source>
</reference>
<feature type="signal peptide" evidence="1">
    <location>
        <begin position="1"/>
        <end position="26"/>
    </location>
</feature>
<feature type="chain" id="PRO_0000020154" description="Outer membrane protein B">
    <location>
        <begin position="27"/>
        <end position="340"/>
    </location>
</feature>
<gene>
    <name type="primary">ompB</name>
    <name type="synonym">porB</name>
    <name type="ordered locus">TC_0086</name>
</gene>
<keyword id="KW-0998">Cell outer membrane</keyword>
<keyword id="KW-0406">Ion transport</keyword>
<keyword id="KW-0472">Membrane</keyword>
<keyword id="KW-0626">Porin</keyword>
<keyword id="KW-0732">Signal</keyword>
<keyword id="KW-0812">Transmembrane</keyword>
<keyword id="KW-1134">Transmembrane beta strand</keyword>
<keyword id="KW-0813">Transport</keyword>
<proteinExistence type="inferred from homology"/>
<accession>Q9PLL3</accession>
<dbReference type="EMBL" id="AE002160">
    <property type="protein sequence ID" value="AAF38966.1"/>
    <property type="molecule type" value="Genomic_DNA"/>
</dbReference>
<dbReference type="PIR" id="H81742">
    <property type="entry name" value="H81742"/>
</dbReference>
<dbReference type="RefSeq" id="WP_010229331.1">
    <property type="nucleotide sequence ID" value="NZ_CP063055.1"/>
</dbReference>
<dbReference type="GeneID" id="1245616"/>
<dbReference type="KEGG" id="cmu:TC_0086"/>
<dbReference type="HOGENOM" id="CLU_815590_0_0_0"/>
<dbReference type="OrthoDB" id="17228at2"/>
<dbReference type="Proteomes" id="UP000000800">
    <property type="component" value="Chromosome"/>
</dbReference>
<dbReference type="GO" id="GO:0009279">
    <property type="term" value="C:cell outer membrane"/>
    <property type="evidence" value="ECO:0007669"/>
    <property type="project" value="UniProtKB-SubCell"/>
</dbReference>
<dbReference type="GO" id="GO:0046930">
    <property type="term" value="C:pore complex"/>
    <property type="evidence" value="ECO:0007669"/>
    <property type="project" value="UniProtKB-KW"/>
</dbReference>
<dbReference type="GO" id="GO:0015288">
    <property type="term" value="F:porin activity"/>
    <property type="evidence" value="ECO:0007669"/>
    <property type="project" value="UniProtKB-KW"/>
</dbReference>
<dbReference type="GO" id="GO:0005198">
    <property type="term" value="F:structural molecule activity"/>
    <property type="evidence" value="ECO:0007669"/>
    <property type="project" value="InterPro"/>
</dbReference>
<dbReference type="GO" id="GO:0006811">
    <property type="term" value="P:monoatomic ion transport"/>
    <property type="evidence" value="ECO:0007669"/>
    <property type="project" value="UniProtKB-KW"/>
</dbReference>
<dbReference type="InterPro" id="IPR000604">
    <property type="entry name" value="Major_OMP_Chlamydia"/>
</dbReference>
<dbReference type="InterPro" id="IPR011250">
    <property type="entry name" value="OMP/PagP_b-brl"/>
</dbReference>
<dbReference type="Pfam" id="PF01308">
    <property type="entry name" value="Chlam_OMP"/>
    <property type="match status" value="1"/>
</dbReference>
<dbReference type="SUPFAM" id="SSF56925">
    <property type="entry name" value="OMPA-like"/>
    <property type="match status" value="1"/>
</dbReference>
<comment type="subcellular location">
    <subcellularLocation>
        <location evidence="2">Cell outer membrane</location>
        <topology evidence="2">Multi-pass membrane protein</topology>
    </subcellularLocation>
</comment>
<comment type="similarity">
    <text evidence="2">Belongs to the chlamydial OMP family.</text>
</comment>
<name>OMP2_CHLMU</name>
<protein>
    <recommendedName>
        <fullName>Outer membrane protein B</fullName>
    </recommendedName>
</protein>
<evidence type="ECO:0000250" key="1"/>
<evidence type="ECO:0000305" key="2"/>